<reference key="1">
    <citation type="journal article" date="2002" name="Proc. Natl. Acad. Sci. U.S.A.">
        <title>Genome sequence of Streptococcus mutans UA159, a cariogenic dental pathogen.</title>
        <authorList>
            <person name="Ajdic D.J."/>
            <person name="McShan W.M."/>
            <person name="McLaughlin R.E."/>
            <person name="Savic G."/>
            <person name="Chang J."/>
            <person name="Carson M.B."/>
            <person name="Primeaux C."/>
            <person name="Tian R."/>
            <person name="Kenton S."/>
            <person name="Jia H.G."/>
            <person name="Lin S.P."/>
            <person name="Qian Y."/>
            <person name="Li S."/>
            <person name="Zhu H."/>
            <person name="Najar F.Z."/>
            <person name="Lai H."/>
            <person name="White J."/>
            <person name="Roe B.A."/>
            <person name="Ferretti J.J."/>
        </authorList>
    </citation>
    <scope>NUCLEOTIDE SEQUENCE [LARGE SCALE GENOMIC DNA]</scope>
    <source>
        <strain>ATCC 700610 / UA159</strain>
    </source>
</reference>
<feature type="chain" id="PRO_0000379393" description="ATP-dependent helicase/deoxyribonuclease subunit B">
    <location>
        <begin position="1"/>
        <end position="1080"/>
    </location>
</feature>
<name>ADDB_STRMU</name>
<accession>Q8DT75</accession>
<gene>
    <name evidence="1" type="primary">rexB</name>
    <name type="ordered locus">SMU_1500</name>
</gene>
<sequence length="1080" mass="123793">MKLLYTDIQYNMIDILAGEAQLAAKAGKRVFYIAPNSLSFEKERAVLETLPERASFAITITRFEQMARYFVLNDIHQGETIDDNGLVMVFYRVLSSFSDQDLRVFGRLKQDAHFINQLVDLYKELKASNLTVLELNQLNSAEKQEDLIKIFTEVETILSAGHFDNQSKIAFFAQQIKFGHLDTALQDLTIVIDGFTRFSAEEENLIGLLHEKGVDIIIGTYISQKAYRSTFSNGNVYQASLDFIRGLAGKFQTKPEYVVSKQEALPAFTKLSQLFESCHDFSDSQLVLTDKDKEHVTIWDVINQKEEVEHVAKSIRRKLYEGHRYKDILVLLGDADAYKLQIGKIFDKYEIPYYFGKAESMSSHPLVHFVDSLERVKRYNFRAEDVMNLLKSGLYGKIRQNQLDKLEQYVIYADIKGKTKFFKDFTLDNHGQFDLKALNKLRAEVMSPLQELIKIQAQKGDSILQKLTNFLEAISLTNNFSKLIQGVSDTEQEKNEQVWKTFTVILEQFHTIFGQEKMKLADFLALLRSGMLAADYRTVPASVDVVTVKSYDLVEPHSNKFVFALGMTQSHFPKIVQNKSLISDEERAKINEATPDNRRFDIVTKENLKKNHFTALSLFNAATQELVLTLPQILNEAEDNTSSYLLELQDMGVPVVEKGGNRLAADPEDIGNYKALLSRVIELNRSAIDQELSKEEQTFWSVAVRYLRQKLAKEGLTIPEVNDKMQTKQVAAEVMAARFPIDQPLNLSSSALTTFYNNQYLYFLQYILGLQELETIHPDARNHGTYLHRVFELVMQDQSTDDFDSKLNRAIDITNHEDSFHLVYNEDEESRYALGILEDIARSTATVLKGDNPVQAESEEEAFELMLDQAVKIRGVIDRIDRLSDGSLGIVDYKSSKNTFDLQKFYNGLSPQLVTYIEALRSCKNLNDTDKIFGAMYLHMQEPKTDLANMKSIEKIPETVHKNLSYKGLFLEDEKAHLANGKYHLHDAVYSQKEVDLLLDYNKRLYRSAAKQIRKGNFLINPYSQDGKSVQGEQLKAITHFEADRHMPYARKLYQLPRKEKRQGFLALMQSKKEEEGNDL</sequence>
<dbReference type="EC" id="3.1.-.-" evidence="1"/>
<dbReference type="EMBL" id="AE014133">
    <property type="protein sequence ID" value="AAN59153.1"/>
    <property type="molecule type" value="Genomic_DNA"/>
</dbReference>
<dbReference type="RefSeq" id="NP_721847.1">
    <property type="nucleotide sequence ID" value="NC_004350.2"/>
</dbReference>
<dbReference type="RefSeq" id="WP_002262920.1">
    <property type="nucleotide sequence ID" value="NC_004350.2"/>
</dbReference>
<dbReference type="SMR" id="Q8DT75"/>
<dbReference type="STRING" id="210007.SMU_1500"/>
<dbReference type="KEGG" id="smu:SMU_1500"/>
<dbReference type="PATRIC" id="fig|210007.7.peg.1335"/>
<dbReference type="eggNOG" id="COG3857">
    <property type="taxonomic scope" value="Bacteria"/>
</dbReference>
<dbReference type="HOGENOM" id="CLU_007838_1_0_9"/>
<dbReference type="OrthoDB" id="9758506at2"/>
<dbReference type="PhylomeDB" id="Q8DT75"/>
<dbReference type="Proteomes" id="UP000002512">
    <property type="component" value="Chromosome"/>
</dbReference>
<dbReference type="GO" id="GO:0008409">
    <property type="term" value="F:5'-3' exonuclease activity"/>
    <property type="evidence" value="ECO:0007669"/>
    <property type="project" value="UniProtKB-UniRule"/>
</dbReference>
<dbReference type="GO" id="GO:0005524">
    <property type="term" value="F:ATP binding"/>
    <property type="evidence" value="ECO:0007669"/>
    <property type="project" value="UniProtKB-UniRule"/>
</dbReference>
<dbReference type="GO" id="GO:0003690">
    <property type="term" value="F:double-stranded DNA binding"/>
    <property type="evidence" value="ECO:0007669"/>
    <property type="project" value="UniProtKB-UniRule"/>
</dbReference>
<dbReference type="GO" id="GO:0004386">
    <property type="term" value="F:helicase activity"/>
    <property type="evidence" value="ECO:0007669"/>
    <property type="project" value="UniProtKB-KW"/>
</dbReference>
<dbReference type="GO" id="GO:0016817">
    <property type="term" value="F:hydrolase activity, acting on acid anhydrides"/>
    <property type="evidence" value="ECO:0007669"/>
    <property type="project" value="InterPro"/>
</dbReference>
<dbReference type="GO" id="GO:0000724">
    <property type="term" value="P:double-strand break repair via homologous recombination"/>
    <property type="evidence" value="ECO:0007669"/>
    <property type="project" value="UniProtKB-UniRule"/>
</dbReference>
<dbReference type="Gene3D" id="3.90.320.10">
    <property type="match status" value="1"/>
</dbReference>
<dbReference type="Gene3D" id="3.40.50.300">
    <property type="entry name" value="P-loop containing nucleotide triphosphate hydrolases"/>
    <property type="match status" value="4"/>
</dbReference>
<dbReference type="HAMAP" id="MF_01453">
    <property type="entry name" value="AddB_type2"/>
    <property type="match status" value="1"/>
</dbReference>
<dbReference type="InterPro" id="IPR049035">
    <property type="entry name" value="ADDB_N"/>
</dbReference>
<dbReference type="InterPro" id="IPR014141">
    <property type="entry name" value="DNA_helicase_suRexB"/>
</dbReference>
<dbReference type="InterPro" id="IPR027417">
    <property type="entry name" value="P-loop_NTPase"/>
</dbReference>
<dbReference type="InterPro" id="IPR011604">
    <property type="entry name" value="PDDEXK-like_dom_sf"/>
</dbReference>
<dbReference type="InterPro" id="IPR038726">
    <property type="entry name" value="PDDEXK_AddAB-type"/>
</dbReference>
<dbReference type="InterPro" id="IPR011335">
    <property type="entry name" value="Restrct_endonuc-II-like"/>
</dbReference>
<dbReference type="NCBIfam" id="TIGR02774">
    <property type="entry name" value="rexB_recomb"/>
    <property type="match status" value="1"/>
</dbReference>
<dbReference type="PANTHER" id="PTHR30591">
    <property type="entry name" value="RECBCD ENZYME SUBUNIT RECC"/>
    <property type="match status" value="1"/>
</dbReference>
<dbReference type="PANTHER" id="PTHR30591:SF1">
    <property type="entry name" value="RECBCD ENZYME SUBUNIT RECC"/>
    <property type="match status" value="1"/>
</dbReference>
<dbReference type="Pfam" id="PF21445">
    <property type="entry name" value="ADDB_N"/>
    <property type="match status" value="1"/>
</dbReference>
<dbReference type="Pfam" id="PF12705">
    <property type="entry name" value="PDDEXK_1"/>
    <property type="match status" value="1"/>
</dbReference>
<dbReference type="SUPFAM" id="SSF52540">
    <property type="entry name" value="P-loop containing nucleoside triphosphate hydrolases"/>
    <property type="match status" value="1"/>
</dbReference>
<dbReference type="SUPFAM" id="SSF52980">
    <property type="entry name" value="Restriction endonuclease-like"/>
    <property type="match status" value="1"/>
</dbReference>
<evidence type="ECO:0000255" key="1">
    <source>
        <dbReference type="HAMAP-Rule" id="MF_01453"/>
    </source>
</evidence>
<proteinExistence type="inferred from homology"/>
<keyword id="KW-0067">ATP-binding</keyword>
<keyword id="KW-0227">DNA damage</keyword>
<keyword id="KW-0234">DNA repair</keyword>
<keyword id="KW-0238">DNA-binding</keyword>
<keyword id="KW-0269">Exonuclease</keyword>
<keyword id="KW-0347">Helicase</keyword>
<keyword id="KW-0378">Hydrolase</keyword>
<keyword id="KW-0540">Nuclease</keyword>
<keyword id="KW-0547">Nucleotide-binding</keyword>
<keyword id="KW-1185">Reference proteome</keyword>
<protein>
    <recommendedName>
        <fullName evidence="1">ATP-dependent helicase/deoxyribonuclease subunit B</fullName>
        <ecNumber evidence="1">3.1.-.-</ecNumber>
    </recommendedName>
    <alternativeName>
        <fullName evidence="1">ATP-dependent helicase/nuclease subunit RexB</fullName>
    </alternativeName>
</protein>
<comment type="function">
    <text evidence="1">The heterodimer acts as both an ATP-dependent DNA helicase and an ATP-dependent, dual-direction single-stranded exonuclease. Recognizes the chi site generating a DNA molecule suitable for the initiation of homologous recombination. This subunit has 5' -&gt; 3' nuclease activity but not helicase activity.</text>
</comment>
<comment type="cofactor">
    <cofactor evidence="1">
        <name>Mg(2+)</name>
        <dbReference type="ChEBI" id="CHEBI:18420"/>
    </cofactor>
</comment>
<comment type="subunit">
    <text evidence="1">Heterodimer of AddA and RexB.</text>
</comment>
<comment type="miscellaneous">
    <text evidence="1">Despite having helicase-like domains, this subunit does not have helicase activity.</text>
</comment>
<comment type="similarity">
    <text evidence="1">Belongs to the helicase family. AddB/RexB type 2 subfamily.</text>
</comment>
<organism>
    <name type="scientific">Streptococcus mutans serotype c (strain ATCC 700610 / UA159)</name>
    <dbReference type="NCBI Taxonomy" id="210007"/>
    <lineage>
        <taxon>Bacteria</taxon>
        <taxon>Bacillati</taxon>
        <taxon>Bacillota</taxon>
        <taxon>Bacilli</taxon>
        <taxon>Lactobacillales</taxon>
        <taxon>Streptococcaceae</taxon>
        <taxon>Streptococcus</taxon>
    </lineage>
</organism>